<accession>P48187</accession>
<name>PSBC_MAIZE</name>
<proteinExistence type="evidence at protein level"/>
<reference key="1">
    <citation type="journal article" date="1995" name="J. Mol. Biol.">
        <title>Complete sequence of the maize chloroplast genome: gene content, hotspots of divergence and fine tuning of genetic information by transcript editing.</title>
        <authorList>
            <person name="Maier R.M."/>
            <person name="Neckermann K."/>
            <person name="Igloi G.L."/>
            <person name="Koessel H."/>
        </authorList>
    </citation>
    <scope>NUCLEOTIDE SEQUENCE [LARGE SCALE GENOMIC DNA]</scope>
    <source>
        <strain>cv. B73</strain>
    </source>
</reference>
<reference key="2">
    <citation type="journal article" date="2012" name="Proteomics">
        <title>Differential phosphorylation of thylakoid proteins in mesophyll and bundle sheath chloroplasts from maize plants grown under low or high light.</title>
        <authorList>
            <person name="Fristedt R."/>
            <person name="Wasilewska W."/>
            <person name="Romanowska E."/>
            <person name="Vener A.V."/>
        </authorList>
    </citation>
    <scope>PROTEIN SEQUENCE OF 15-26</scope>
    <scope>SUBCELLULAR LOCATION</scope>
    <scope>PHOSPHORYLATION AT THR-15</scope>
    <scope>ACETYLATION AT THR-15</scope>
    <source>
        <strain>cv. Olenka</strain>
        <tissue>Bundle sheath cell</tissue>
        <tissue>Mesophyll cell</tissue>
    </source>
</reference>
<gene>
    <name evidence="1" type="primary">psbC</name>
</gene>
<evidence type="ECO:0000255" key="1">
    <source>
        <dbReference type="HAMAP-Rule" id="MF_01496"/>
    </source>
</evidence>
<evidence type="ECO:0000269" key="2">
    <source>
    </source>
</evidence>
<geneLocation type="chloroplast"/>
<feature type="propeptide" id="PRO_0000361510" evidence="1 2">
    <location>
        <begin position="1"/>
        <end position="14"/>
    </location>
</feature>
<feature type="chain" id="PRO_0000077518" description="Photosystem II CP43 reaction center protein" evidence="1">
    <location>
        <begin position="15"/>
        <end position="473"/>
    </location>
</feature>
<feature type="transmembrane region" description="Helical" evidence="1">
    <location>
        <begin position="69"/>
        <end position="93"/>
    </location>
</feature>
<feature type="transmembrane region" description="Helical" evidence="1">
    <location>
        <begin position="134"/>
        <end position="155"/>
    </location>
</feature>
<feature type="transmembrane region" description="Helical" evidence="1">
    <location>
        <begin position="178"/>
        <end position="200"/>
    </location>
</feature>
<feature type="transmembrane region" description="Helical" evidence="1">
    <location>
        <begin position="255"/>
        <end position="275"/>
    </location>
</feature>
<feature type="transmembrane region" description="Helical" evidence="1">
    <location>
        <begin position="291"/>
        <end position="312"/>
    </location>
</feature>
<feature type="transmembrane region" description="Helical" evidence="1">
    <location>
        <begin position="447"/>
        <end position="471"/>
    </location>
</feature>
<feature type="binding site" evidence="1">
    <location>
        <position position="367"/>
    </location>
    <ligand>
        <name>[CaMn4O5] cluster</name>
        <dbReference type="ChEBI" id="CHEBI:189552"/>
    </ligand>
</feature>
<feature type="modified residue" description="N-acetylthreonine" evidence="1 2">
    <location>
        <position position="15"/>
    </location>
</feature>
<feature type="modified residue" description="Phosphothreonine" evidence="1 2">
    <location>
        <position position="15"/>
    </location>
</feature>
<keyword id="KW-0007">Acetylation</keyword>
<keyword id="KW-0148">Chlorophyll</keyword>
<keyword id="KW-0150">Chloroplast</keyword>
<keyword id="KW-0157">Chromophore</keyword>
<keyword id="KW-0903">Direct protein sequencing</keyword>
<keyword id="KW-0464">Manganese</keyword>
<keyword id="KW-0472">Membrane</keyword>
<keyword id="KW-0479">Metal-binding</keyword>
<keyword id="KW-0597">Phosphoprotein</keyword>
<keyword id="KW-0602">Photosynthesis</keyword>
<keyword id="KW-0604">Photosystem II</keyword>
<keyword id="KW-0934">Plastid</keyword>
<keyword id="KW-1185">Reference proteome</keyword>
<keyword id="KW-0793">Thylakoid</keyword>
<keyword id="KW-0812">Transmembrane</keyword>
<keyword id="KW-1133">Transmembrane helix</keyword>
<comment type="function">
    <text evidence="1">One of the components of the core complex of photosystem II (PSII). It binds chlorophyll and helps catalyze the primary light-induced photochemical processes of PSII. PSII is a light-driven water:plastoquinone oxidoreductase, using light energy to abstract electrons from H(2)O, generating O(2) and a proton gradient subsequently used for ATP formation.</text>
</comment>
<comment type="cofactor">
    <text evidence="1">Binds multiple chlorophylls and provides some of the ligands for the Ca-4Mn-5O cluster of the oxygen-evolving complex. It may also provide a ligand for a Cl- that is required for oxygen evolution. PSII binds additional chlorophylls, carotenoids and specific lipids.</text>
</comment>
<comment type="subunit">
    <text evidence="1">PSII is composed of 1 copy each of membrane proteins PsbA, PsbB, PsbC, PsbD, PsbE, PsbF, PsbH, PsbI, PsbJ, PsbK, PsbL, PsbM, PsbT, PsbX, PsbY, PsbZ, Psb30/Ycf12, at least 3 peripheral proteins of the oxygen-evolving complex and a large number of cofactors. It forms dimeric complexes.</text>
</comment>
<comment type="subcellular location">
    <subcellularLocation>
        <location evidence="1">Plastid</location>
        <location evidence="1">Chloroplast thylakoid membrane</location>
        <topology evidence="1">Multi-pass membrane protein</topology>
    </subcellularLocation>
</comment>
<comment type="PTM">
    <text evidence="2">Phosphorylated in both bundle sheath and mesophyll cells, phosphorylation increases when cells are grown under high rather than low light regimes (70 vs 900 umol photons/m-2/s).</text>
</comment>
<comment type="similarity">
    <text evidence="1">Belongs to the PsbB/PsbC family. PsbC subfamily.</text>
</comment>
<sequence length="473" mass="51900">MKILYSLRRFYHVETLFNGTFVLAGRDQETTGFPWWAGNARLINLSGKLLGAHVAHAGLIVFWAGAMNLFEVAHFVPEKPMYEQGLILLPHLATLGWGVGSGGEVLDTFPYFVSGVLHLISSAVLGFGGIYHALLGPETLEESFPFFGYVWQDRNKMTTLLGIHLILLGLGAFLLVLKALYFGGVYDTWAPGGGDVRKITNLTLSPGVIFGYLLKSPFGGEGWIVSVDDLEDIIGGHVWLGSICVLGGIWHILTKPFAWARRAFVWSGEAYLSYSLGALSVFGFIACCFVWFNNTAYPSEFYGPTGPEASQAQAFTFLVRDQRLGANVGSAQGPTGLGKYLMRSPTGEVIFGGETMRFWDLRAPWLEPLRGPNGLDLSRLKKDGQPWQERRSGEYMTHAPLGSLNSVGGVATEINAVNYVSPRSWLATSHFVLGFFFFVGHLWHAGRARAAAAGFEKGIDRDLEPVVYMTPLN</sequence>
<protein>
    <recommendedName>
        <fullName evidence="1">Photosystem II CP43 reaction center protein</fullName>
    </recommendedName>
    <alternativeName>
        <fullName evidence="1">PSII 43 kDa protein</fullName>
    </alternativeName>
    <alternativeName>
        <fullName evidence="1">Protein CP-43</fullName>
    </alternativeName>
</protein>
<organism>
    <name type="scientific">Zea mays</name>
    <name type="common">Maize</name>
    <dbReference type="NCBI Taxonomy" id="4577"/>
    <lineage>
        <taxon>Eukaryota</taxon>
        <taxon>Viridiplantae</taxon>
        <taxon>Streptophyta</taxon>
        <taxon>Embryophyta</taxon>
        <taxon>Tracheophyta</taxon>
        <taxon>Spermatophyta</taxon>
        <taxon>Magnoliopsida</taxon>
        <taxon>Liliopsida</taxon>
        <taxon>Poales</taxon>
        <taxon>Poaceae</taxon>
        <taxon>PACMAD clade</taxon>
        <taxon>Panicoideae</taxon>
        <taxon>Andropogonodae</taxon>
        <taxon>Andropogoneae</taxon>
        <taxon>Tripsacinae</taxon>
        <taxon>Zea</taxon>
    </lineage>
</organism>
<dbReference type="EMBL" id="X86563">
    <property type="protein sequence ID" value="CAA60271.1"/>
    <property type="molecule type" value="Genomic_DNA"/>
</dbReference>
<dbReference type="PIR" id="S58537">
    <property type="entry name" value="S58537"/>
</dbReference>
<dbReference type="RefSeq" id="NP_043010.1">
    <property type="nucleotide sequence ID" value="NC_001666.2"/>
</dbReference>
<dbReference type="SMR" id="P48187"/>
<dbReference type="FunCoup" id="P48187">
    <property type="interactions" value="562"/>
</dbReference>
<dbReference type="STRING" id="4577.P48187"/>
<dbReference type="iPTMnet" id="P48187"/>
<dbReference type="PaxDb" id="4577-GRMZM5G856777_P01"/>
<dbReference type="GeneID" id="845201"/>
<dbReference type="KEGG" id="zma:845201"/>
<dbReference type="MaizeGDB" id="105980"/>
<dbReference type="eggNOG" id="ENOG502QR3X">
    <property type="taxonomic scope" value="Eukaryota"/>
</dbReference>
<dbReference type="HOGENOM" id="CLU_028310_1_1_1"/>
<dbReference type="InParanoid" id="P48187"/>
<dbReference type="OMA" id="FIWNGEA"/>
<dbReference type="OrthoDB" id="634232at2759"/>
<dbReference type="Proteomes" id="UP000007305">
    <property type="component" value="Chloroplast"/>
</dbReference>
<dbReference type="ExpressionAtlas" id="P48187">
    <property type="expression patterns" value="baseline"/>
</dbReference>
<dbReference type="GO" id="GO:0009535">
    <property type="term" value="C:chloroplast thylakoid membrane"/>
    <property type="evidence" value="ECO:0007669"/>
    <property type="project" value="UniProtKB-SubCell"/>
</dbReference>
<dbReference type="GO" id="GO:0009523">
    <property type="term" value="C:photosystem II"/>
    <property type="evidence" value="ECO:0007669"/>
    <property type="project" value="UniProtKB-KW"/>
</dbReference>
<dbReference type="GO" id="GO:0016168">
    <property type="term" value="F:chlorophyll binding"/>
    <property type="evidence" value="ECO:0007669"/>
    <property type="project" value="UniProtKB-UniRule"/>
</dbReference>
<dbReference type="GO" id="GO:0045156">
    <property type="term" value="F:electron transporter, transferring electrons within the cyclic electron transport pathway of photosynthesis activity"/>
    <property type="evidence" value="ECO:0007669"/>
    <property type="project" value="InterPro"/>
</dbReference>
<dbReference type="GO" id="GO:0046872">
    <property type="term" value="F:metal ion binding"/>
    <property type="evidence" value="ECO:0007669"/>
    <property type="project" value="UniProtKB-KW"/>
</dbReference>
<dbReference type="GO" id="GO:0009772">
    <property type="term" value="P:photosynthetic electron transport in photosystem II"/>
    <property type="evidence" value="ECO:0007669"/>
    <property type="project" value="InterPro"/>
</dbReference>
<dbReference type="FunFam" id="1.10.10.670:FF:000001">
    <property type="entry name" value="Photosystem II CP43 reaction center protein"/>
    <property type="match status" value="1"/>
</dbReference>
<dbReference type="Gene3D" id="1.10.10.670">
    <property type="entry name" value="photosystem ii from thermosynechococcus elongatus"/>
    <property type="match status" value="1"/>
</dbReference>
<dbReference type="HAMAP" id="MF_01496">
    <property type="entry name" value="PSII_PsbC_CP43"/>
    <property type="match status" value="1"/>
</dbReference>
<dbReference type="InterPro" id="IPR000932">
    <property type="entry name" value="PS_antenna-like"/>
</dbReference>
<dbReference type="InterPro" id="IPR036001">
    <property type="entry name" value="PS_II_antenna-like_sf"/>
</dbReference>
<dbReference type="InterPro" id="IPR005869">
    <property type="entry name" value="PSII_PsbC"/>
</dbReference>
<dbReference type="InterPro" id="IPR044900">
    <property type="entry name" value="PSII_PsbC_sf"/>
</dbReference>
<dbReference type="NCBIfam" id="TIGR01153">
    <property type="entry name" value="psbC"/>
    <property type="match status" value="1"/>
</dbReference>
<dbReference type="Pfam" id="PF00421">
    <property type="entry name" value="PSII"/>
    <property type="match status" value="1"/>
</dbReference>
<dbReference type="SUPFAM" id="SSF161077">
    <property type="entry name" value="Photosystem II antenna protein-like"/>
    <property type="match status" value="1"/>
</dbReference>